<sequence>MEMVEEHIKGILKNRKIHFTLIDPDEQTPQEALEIAEEAILGGTDGIMIGGSTVNNDEVDETCKILSENIEVPIILFPGNINSVSKYADAIFFMSYLNSTNPYWIYGAQALAAPIVRQAGIEVLPMGYMVVQPGGTVGWVGDAKLVPRNKPKIPAAYAMSAELLGMRFFYIEAGSGADKPIPPEMVGYTKKATEDMVIIVGGGIRDGEAAYTAAKAGGDIIVTGTVVEETNDVRGKIEEITAAIRKASIE</sequence>
<name>GGGPS_METS3</name>
<gene>
    <name type="ordered locus">Msm_0124</name>
</gene>
<dbReference type="EC" id="2.5.1.41" evidence="1"/>
<dbReference type="EMBL" id="CP000678">
    <property type="protein sequence ID" value="ABQ86329.1"/>
    <property type="molecule type" value="Genomic_DNA"/>
</dbReference>
<dbReference type="RefSeq" id="WP_011953700.1">
    <property type="nucleotide sequence ID" value="NZ_CP117965.1"/>
</dbReference>
<dbReference type="SMR" id="A5UJF1"/>
<dbReference type="STRING" id="420247.Msm_0124"/>
<dbReference type="EnsemblBacteria" id="ABQ86329">
    <property type="protein sequence ID" value="ABQ86329"/>
    <property type="gene ID" value="Msm_0124"/>
</dbReference>
<dbReference type="KEGG" id="msi:Msm_0124"/>
<dbReference type="PATRIC" id="fig|420247.28.peg.128"/>
<dbReference type="eggNOG" id="arCOG01085">
    <property type="taxonomic scope" value="Archaea"/>
</dbReference>
<dbReference type="HOGENOM" id="CLU_068610_0_0_2"/>
<dbReference type="BioCyc" id="MSMI420247:GHWZ-125-MONOMER"/>
<dbReference type="UniPathway" id="UPA00940"/>
<dbReference type="Proteomes" id="UP000001992">
    <property type="component" value="Chromosome"/>
</dbReference>
<dbReference type="GO" id="GO:0005737">
    <property type="term" value="C:cytoplasm"/>
    <property type="evidence" value="ECO:0007669"/>
    <property type="project" value="UniProtKB-SubCell"/>
</dbReference>
<dbReference type="GO" id="GO:0000287">
    <property type="term" value="F:magnesium ion binding"/>
    <property type="evidence" value="ECO:0007669"/>
    <property type="project" value="UniProtKB-UniRule"/>
</dbReference>
<dbReference type="GO" id="GO:0047294">
    <property type="term" value="F:phosphoglycerol geranylgeranyltransferase activity"/>
    <property type="evidence" value="ECO:0007669"/>
    <property type="project" value="UniProtKB-UniRule"/>
</dbReference>
<dbReference type="GO" id="GO:0046474">
    <property type="term" value="P:glycerophospholipid biosynthetic process"/>
    <property type="evidence" value="ECO:0007669"/>
    <property type="project" value="UniProtKB-UniRule"/>
</dbReference>
<dbReference type="CDD" id="cd02812">
    <property type="entry name" value="PcrB_like"/>
    <property type="match status" value="1"/>
</dbReference>
<dbReference type="FunFam" id="3.20.20.390:FF:000001">
    <property type="entry name" value="Heptaprenylglyceryl phosphate synthase"/>
    <property type="match status" value="1"/>
</dbReference>
<dbReference type="Gene3D" id="3.20.20.390">
    <property type="entry name" value="FMN-linked oxidoreductases"/>
    <property type="match status" value="1"/>
</dbReference>
<dbReference type="HAMAP" id="MF_00112">
    <property type="entry name" value="GGGP_HepGP_synthase"/>
    <property type="match status" value="1"/>
</dbReference>
<dbReference type="InterPro" id="IPR039074">
    <property type="entry name" value="GGGP/HepGP_synthase_I"/>
</dbReference>
<dbReference type="InterPro" id="IPR038597">
    <property type="entry name" value="GGGP/HepGP_synthase_sf"/>
</dbReference>
<dbReference type="InterPro" id="IPR008205">
    <property type="entry name" value="GGGP_HepGP_synthase"/>
</dbReference>
<dbReference type="InterPro" id="IPR010946">
    <property type="entry name" value="GGGP_synth"/>
</dbReference>
<dbReference type="NCBIfam" id="TIGR01769">
    <property type="entry name" value="GGGP"/>
    <property type="match status" value="1"/>
</dbReference>
<dbReference type="NCBIfam" id="TIGR01768">
    <property type="entry name" value="GGGP-family"/>
    <property type="match status" value="1"/>
</dbReference>
<dbReference type="NCBIfam" id="NF003198">
    <property type="entry name" value="PRK04169.1-2"/>
    <property type="match status" value="1"/>
</dbReference>
<dbReference type="PANTHER" id="PTHR40029">
    <property type="match status" value="1"/>
</dbReference>
<dbReference type="PANTHER" id="PTHR40029:SF2">
    <property type="entry name" value="HEPTAPRENYLGLYCERYL PHOSPHATE SYNTHASE"/>
    <property type="match status" value="1"/>
</dbReference>
<dbReference type="Pfam" id="PF01884">
    <property type="entry name" value="PcrB"/>
    <property type="match status" value="1"/>
</dbReference>
<dbReference type="SUPFAM" id="SSF51395">
    <property type="entry name" value="FMN-linked oxidoreductases"/>
    <property type="match status" value="1"/>
</dbReference>
<reference key="1">
    <citation type="journal article" date="2007" name="Proc. Natl. Acad. Sci. U.S.A.">
        <title>Genomic and metabolic adaptations of Methanobrevibacter smithii to the human gut.</title>
        <authorList>
            <person name="Samuel B.S."/>
            <person name="Hansen E.E."/>
            <person name="Manchester J.K."/>
            <person name="Coutinho P.M."/>
            <person name="Henrissat B."/>
            <person name="Fulton R."/>
            <person name="Latreille P."/>
            <person name="Kim K."/>
            <person name="Wilson R.K."/>
            <person name="Gordon J.I."/>
        </authorList>
    </citation>
    <scope>NUCLEOTIDE SEQUENCE [LARGE SCALE GENOMIC DNA]</scope>
    <source>
        <strain>ATCC 35061 / DSM 861 / OCM 144 / PS</strain>
    </source>
</reference>
<comment type="function">
    <text evidence="1">Prenyltransferase that catalyzes the transfer of the geranylgeranyl moiety of geranylgeranyl diphosphate (GGPP) to the C3 hydroxyl of sn-glycerol-1-phosphate (G1P). This reaction is the first ether-bond-formation step in the biosynthesis of archaeal membrane lipids.</text>
</comment>
<comment type="catalytic activity">
    <reaction evidence="1">
        <text>sn-glycerol 1-phosphate + (2E,6E,10E)-geranylgeranyl diphosphate = sn-3-O-(geranylgeranyl)glycerol 1-phosphate + diphosphate</text>
        <dbReference type="Rhea" id="RHEA:23404"/>
        <dbReference type="ChEBI" id="CHEBI:33019"/>
        <dbReference type="ChEBI" id="CHEBI:57677"/>
        <dbReference type="ChEBI" id="CHEBI:57685"/>
        <dbReference type="ChEBI" id="CHEBI:58756"/>
        <dbReference type="EC" id="2.5.1.41"/>
    </reaction>
</comment>
<comment type="cofactor">
    <cofactor evidence="1">
        <name>Mg(2+)</name>
        <dbReference type="ChEBI" id="CHEBI:18420"/>
    </cofactor>
</comment>
<comment type="pathway">
    <text evidence="1">Membrane lipid metabolism; glycerophospholipid metabolism.</text>
</comment>
<comment type="subcellular location">
    <subcellularLocation>
        <location evidence="1">Cytoplasm</location>
    </subcellularLocation>
</comment>
<comment type="similarity">
    <text evidence="1">Belongs to the GGGP/HepGP synthase family. Group II subfamily.</text>
</comment>
<evidence type="ECO:0000255" key="1">
    <source>
        <dbReference type="HAMAP-Rule" id="MF_00112"/>
    </source>
</evidence>
<proteinExistence type="inferred from homology"/>
<feature type="chain" id="PRO_0000350678" description="Geranylgeranylglyceryl phosphate synthase">
    <location>
        <begin position="1"/>
        <end position="250"/>
    </location>
</feature>
<feature type="binding site" evidence="1">
    <location>
        <position position="23"/>
    </location>
    <ligand>
        <name>Mg(2+)</name>
        <dbReference type="ChEBI" id="CHEBI:18420"/>
    </ligand>
</feature>
<feature type="binding site" evidence="1">
    <location>
        <position position="52"/>
    </location>
    <ligand>
        <name>Mg(2+)</name>
        <dbReference type="ChEBI" id="CHEBI:18420"/>
    </ligand>
</feature>
<feature type="binding site" evidence="1">
    <location>
        <begin position="170"/>
        <end position="176"/>
    </location>
    <ligand>
        <name>sn-glycerol 1-phosphate</name>
        <dbReference type="ChEBI" id="CHEBI:57685"/>
    </ligand>
</feature>
<feature type="binding site" evidence="1">
    <location>
        <begin position="202"/>
        <end position="203"/>
    </location>
    <ligand>
        <name>sn-glycerol 1-phosphate</name>
        <dbReference type="ChEBI" id="CHEBI:57685"/>
    </ligand>
</feature>
<feature type="binding site" evidence="1">
    <location>
        <begin position="224"/>
        <end position="225"/>
    </location>
    <ligand>
        <name>sn-glycerol 1-phosphate</name>
        <dbReference type="ChEBI" id="CHEBI:57685"/>
    </ligand>
</feature>
<protein>
    <recommendedName>
        <fullName evidence="1">Geranylgeranylglyceryl phosphate synthase</fullName>
        <shortName evidence="1">GGGP synthase</shortName>
        <shortName evidence="1">GGGPS</shortName>
        <ecNumber evidence="1">2.5.1.41</ecNumber>
    </recommendedName>
    <alternativeName>
        <fullName evidence="1">(S)-3-O-geranylgeranylglyceryl phosphate synthase</fullName>
    </alternativeName>
    <alternativeName>
        <fullName evidence="1">Phosphoglycerol geranylgeranyltransferase</fullName>
    </alternativeName>
</protein>
<keyword id="KW-0963">Cytoplasm</keyword>
<keyword id="KW-0444">Lipid biosynthesis</keyword>
<keyword id="KW-0443">Lipid metabolism</keyword>
<keyword id="KW-0460">Magnesium</keyword>
<keyword id="KW-0479">Metal-binding</keyword>
<keyword id="KW-0594">Phospholipid biosynthesis</keyword>
<keyword id="KW-1208">Phospholipid metabolism</keyword>
<keyword id="KW-0808">Transferase</keyword>
<organism>
    <name type="scientific">Methanobrevibacter smithii (strain ATCC 35061 / DSM 861 / OCM 144 / PS)</name>
    <dbReference type="NCBI Taxonomy" id="420247"/>
    <lineage>
        <taxon>Archaea</taxon>
        <taxon>Methanobacteriati</taxon>
        <taxon>Methanobacteriota</taxon>
        <taxon>Methanomada group</taxon>
        <taxon>Methanobacteria</taxon>
        <taxon>Methanobacteriales</taxon>
        <taxon>Methanobacteriaceae</taxon>
        <taxon>Methanobrevibacter</taxon>
    </lineage>
</organism>
<accession>A5UJF1</accession>